<protein>
    <recommendedName>
        <fullName evidence="1">Large ribosomal subunit protein bL19</fullName>
    </recommendedName>
    <alternativeName>
        <fullName evidence="2">50S ribosomal protein L19</fullName>
    </alternativeName>
</protein>
<accession>B3CM66</accession>
<gene>
    <name evidence="1" type="primary">rplS</name>
    <name type="ordered locus">WP0877</name>
</gene>
<reference key="1">
    <citation type="journal article" date="2008" name="Mol. Biol. Evol.">
        <title>Genome evolution of Wolbachia strain wPip from the Culex pipiens group.</title>
        <authorList>
            <person name="Klasson L."/>
            <person name="Walker T."/>
            <person name="Sebaihia M."/>
            <person name="Sanders M.J."/>
            <person name="Quail M.A."/>
            <person name="Lord A."/>
            <person name="Sanders S."/>
            <person name="Earl J."/>
            <person name="O'Neill S.L."/>
            <person name="Thomson N."/>
            <person name="Sinkins S.P."/>
            <person name="Parkhill J."/>
        </authorList>
    </citation>
    <scope>NUCLEOTIDE SEQUENCE [LARGE SCALE GENOMIC DNA]</scope>
    <source>
        <strain>wPip</strain>
    </source>
</reference>
<evidence type="ECO:0000255" key="1">
    <source>
        <dbReference type="HAMAP-Rule" id="MF_00402"/>
    </source>
</evidence>
<evidence type="ECO:0000305" key="2"/>
<name>RL19_WOLPP</name>
<organism>
    <name type="scientific">Wolbachia pipientis subsp. Culex pipiens (strain wPip)</name>
    <dbReference type="NCBI Taxonomy" id="570417"/>
    <lineage>
        <taxon>Bacteria</taxon>
        <taxon>Pseudomonadati</taxon>
        <taxon>Pseudomonadota</taxon>
        <taxon>Alphaproteobacteria</taxon>
        <taxon>Rickettsiales</taxon>
        <taxon>Anaplasmataceae</taxon>
        <taxon>Wolbachieae</taxon>
        <taxon>Wolbachia</taxon>
    </lineage>
</organism>
<proteinExistence type="inferred from homology"/>
<feature type="chain" id="PRO_1000193919" description="Large ribosomal subunit protein bL19">
    <location>
        <begin position="1"/>
        <end position="125"/>
    </location>
</feature>
<dbReference type="EMBL" id="AM999887">
    <property type="protein sequence ID" value="CAQ54985.1"/>
    <property type="molecule type" value="Genomic_DNA"/>
</dbReference>
<dbReference type="RefSeq" id="WP_007302278.1">
    <property type="nucleotide sequence ID" value="NC_010981.1"/>
</dbReference>
<dbReference type="SMR" id="B3CM66"/>
<dbReference type="KEGG" id="wpi:WP0877"/>
<dbReference type="eggNOG" id="COG0335">
    <property type="taxonomic scope" value="Bacteria"/>
</dbReference>
<dbReference type="HOGENOM" id="CLU_103507_2_1_5"/>
<dbReference type="Proteomes" id="UP000008814">
    <property type="component" value="Chromosome"/>
</dbReference>
<dbReference type="GO" id="GO:0022625">
    <property type="term" value="C:cytosolic large ribosomal subunit"/>
    <property type="evidence" value="ECO:0007669"/>
    <property type="project" value="TreeGrafter"/>
</dbReference>
<dbReference type="GO" id="GO:0003735">
    <property type="term" value="F:structural constituent of ribosome"/>
    <property type="evidence" value="ECO:0007669"/>
    <property type="project" value="InterPro"/>
</dbReference>
<dbReference type="GO" id="GO:0006412">
    <property type="term" value="P:translation"/>
    <property type="evidence" value="ECO:0007669"/>
    <property type="project" value="UniProtKB-UniRule"/>
</dbReference>
<dbReference type="Gene3D" id="2.30.30.790">
    <property type="match status" value="1"/>
</dbReference>
<dbReference type="HAMAP" id="MF_00402">
    <property type="entry name" value="Ribosomal_bL19"/>
    <property type="match status" value="1"/>
</dbReference>
<dbReference type="InterPro" id="IPR001857">
    <property type="entry name" value="Ribosomal_bL19"/>
</dbReference>
<dbReference type="InterPro" id="IPR038657">
    <property type="entry name" value="Ribosomal_bL19_sf"/>
</dbReference>
<dbReference type="InterPro" id="IPR008991">
    <property type="entry name" value="Translation_prot_SH3-like_sf"/>
</dbReference>
<dbReference type="NCBIfam" id="TIGR01024">
    <property type="entry name" value="rplS_bact"/>
    <property type="match status" value="1"/>
</dbReference>
<dbReference type="PANTHER" id="PTHR15680:SF9">
    <property type="entry name" value="LARGE RIBOSOMAL SUBUNIT PROTEIN BL19M"/>
    <property type="match status" value="1"/>
</dbReference>
<dbReference type="PANTHER" id="PTHR15680">
    <property type="entry name" value="RIBOSOMAL PROTEIN L19"/>
    <property type="match status" value="1"/>
</dbReference>
<dbReference type="Pfam" id="PF01245">
    <property type="entry name" value="Ribosomal_L19"/>
    <property type="match status" value="1"/>
</dbReference>
<dbReference type="PIRSF" id="PIRSF002191">
    <property type="entry name" value="Ribosomal_L19"/>
    <property type="match status" value="1"/>
</dbReference>
<dbReference type="PRINTS" id="PR00061">
    <property type="entry name" value="RIBOSOMALL19"/>
</dbReference>
<dbReference type="SUPFAM" id="SSF50104">
    <property type="entry name" value="Translation proteins SH3-like domain"/>
    <property type="match status" value="1"/>
</dbReference>
<comment type="function">
    <text evidence="1">This protein is located at the 30S-50S ribosomal subunit interface and may play a role in the structure and function of the aminoacyl-tRNA binding site.</text>
</comment>
<comment type="similarity">
    <text evidence="1">Belongs to the bacterial ribosomal protein bL19 family.</text>
</comment>
<keyword id="KW-0687">Ribonucleoprotein</keyword>
<keyword id="KW-0689">Ribosomal protein</keyword>
<sequence length="125" mass="14379">MTNLLEKFNEQQIQRLAKEMPAFCPGDDLKVTFKVVDSTGERIQIFEGVCISKRNRGLHSSFSVRKVSHGESIVSQFFVYSPALISVQVMRKGKVRRAKLYYLCKLFGKAARIKERTTYVKKKSK</sequence>